<dbReference type="EC" id="2.7.1.30" evidence="1"/>
<dbReference type="EMBL" id="CP001400">
    <property type="protein sequence ID" value="ACP37354.1"/>
    <property type="molecule type" value="Genomic_DNA"/>
</dbReference>
<dbReference type="RefSeq" id="WP_012710631.1">
    <property type="nucleotide sequence ID" value="NC_012588.1"/>
</dbReference>
<dbReference type="SMR" id="C3MUZ1"/>
<dbReference type="GeneID" id="84061005"/>
<dbReference type="KEGG" id="sia:M1425_0503"/>
<dbReference type="HOGENOM" id="CLU_009281_2_3_2"/>
<dbReference type="UniPathway" id="UPA00618">
    <property type="reaction ID" value="UER00672"/>
</dbReference>
<dbReference type="Proteomes" id="UP000001350">
    <property type="component" value="Chromosome"/>
</dbReference>
<dbReference type="GO" id="GO:0005829">
    <property type="term" value="C:cytosol"/>
    <property type="evidence" value="ECO:0007669"/>
    <property type="project" value="TreeGrafter"/>
</dbReference>
<dbReference type="GO" id="GO:0005524">
    <property type="term" value="F:ATP binding"/>
    <property type="evidence" value="ECO:0007669"/>
    <property type="project" value="UniProtKB-UniRule"/>
</dbReference>
<dbReference type="GO" id="GO:0004370">
    <property type="term" value="F:glycerol kinase activity"/>
    <property type="evidence" value="ECO:0000250"/>
    <property type="project" value="UniProtKB"/>
</dbReference>
<dbReference type="GO" id="GO:0019563">
    <property type="term" value="P:glycerol catabolic process"/>
    <property type="evidence" value="ECO:0007669"/>
    <property type="project" value="UniProtKB-UniRule"/>
</dbReference>
<dbReference type="GO" id="GO:0006071">
    <property type="term" value="P:glycerol metabolic process"/>
    <property type="evidence" value="ECO:0000250"/>
    <property type="project" value="UniProtKB"/>
</dbReference>
<dbReference type="GO" id="GO:0006072">
    <property type="term" value="P:glycerol-3-phosphate metabolic process"/>
    <property type="evidence" value="ECO:0007669"/>
    <property type="project" value="InterPro"/>
</dbReference>
<dbReference type="CDD" id="cd07786">
    <property type="entry name" value="FGGY_EcGK_like"/>
    <property type="match status" value="1"/>
</dbReference>
<dbReference type="FunFam" id="3.30.420.40:FF:000007">
    <property type="entry name" value="Glycerol kinase"/>
    <property type="match status" value="1"/>
</dbReference>
<dbReference type="FunFam" id="3.30.420.40:FF:000008">
    <property type="entry name" value="Glycerol kinase"/>
    <property type="match status" value="1"/>
</dbReference>
<dbReference type="Gene3D" id="3.30.420.40">
    <property type="match status" value="2"/>
</dbReference>
<dbReference type="HAMAP" id="MF_00186">
    <property type="entry name" value="Glycerol_kin"/>
    <property type="match status" value="1"/>
</dbReference>
<dbReference type="InterPro" id="IPR043129">
    <property type="entry name" value="ATPase_NBD"/>
</dbReference>
<dbReference type="InterPro" id="IPR000577">
    <property type="entry name" value="Carb_kinase_FGGY"/>
</dbReference>
<dbReference type="InterPro" id="IPR018483">
    <property type="entry name" value="Carb_kinase_FGGY_CS"/>
</dbReference>
<dbReference type="InterPro" id="IPR018485">
    <property type="entry name" value="FGGY_C"/>
</dbReference>
<dbReference type="InterPro" id="IPR018484">
    <property type="entry name" value="FGGY_N"/>
</dbReference>
<dbReference type="InterPro" id="IPR005999">
    <property type="entry name" value="Glycerol_kin"/>
</dbReference>
<dbReference type="NCBIfam" id="TIGR01311">
    <property type="entry name" value="glycerol_kin"/>
    <property type="match status" value="1"/>
</dbReference>
<dbReference type="NCBIfam" id="NF000756">
    <property type="entry name" value="PRK00047.1"/>
    <property type="match status" value="1"/>
</dbReference>
<dbReference type="PANTHER" id="PTHR10196:SF69">
    <property type="entry name" value="GLYCEROL KINASE"/>
    <property type="match status" value="1"/>
</dbReference>
<dbReference type="PANTHER" id="PTHR10196">
    <property type="entry name" value="SUGAR KINASE"/>
    <property type="match status" value="1"/>
</dbReference>
<dbReference type="Pfam" id="PF02782">
    <property type="entry name" value="FGGY_C"/>
    <property type="match status" value="1"/>
</dbReference>
<dbReference type="Pfam" id="PF00370">
    <property type="entry name" value="FGGY_N"/>
    <property type="match status" value="1"/>
</dbReference>
<dbReference type="PIRSF" id="PIRSF000538">
    <property type="entry name" value="GlpK"/>
    <property type="match status" value="1"/>
</dbReference>
<dbReference type="SUPFAM" id="SSF53067">
    <property type="entry name" value="Actin-like ATPase domain"/>
    <property type="match status" value="2"/>
</dbReference>
<dbReference type="PROSITE" id="PS00933">
    <property type="entry name" value="FGGY_KINASES_1"/>
    <property type="match status" value="1"/>
</dbReference>
<dbReference type="PROSITE" id="PS00445">
    <property type="entry name" value="FGGY_KINASES_2"/>
    <property type="match status" value="1"/>
</dbReference>
<keyword id="KW-0067">ATP-binding</keyword>
<keyword id="KW-0319">Glycerol metabolism</keyword>
<keyword id="KW-0418">Kinase</keyword>
<keyword id="KW-0547">Nucleotide-binding</keyword>
<keyword id="KW-0808">Transferase</keyword>
<gene>
    <name evidence="1" type="primary">glpK</name>
    <name type="ordered locus">M1425_0503</name>
</gene>
<proteinExistence type="inferred from homology"/>
<name>GLPK_SACI4</name>
<sequence>MNTMSHKFVLALDEGTTSARAILFDSDLNIVNIGQYEFPQHYPQPGYVEHDPEEIWEAQMLAVKKAISKIDAKQIVAIGITNQRETTVLWDAKSGKPVYNAIVWQDRRTSPITDWLKANYFKMIKDKTGLVPDPYFSASKIKWILDNVSNVREKAERGEIKFGTIDTYLIWRLTNGKAHVTDYSNASRTMLFNINKLEWDREILELLKIPESILPEVKPSSEIYGYSEALGNLIPISGDAGDQQAALFGQVAFNVGEIKATYGTGSFILMNIGNNPIRSENLLTTIAWGLEKNKAKYALEGSIFITGAAVQWFRDGLRAIDVSDEIEPLASSVEDNGGVYFVPAFVGLGAPYWDPYARGLIIGITRGTTKAHIARAILESMAYQTRDVIEVMQKEAGISINSLKVDGGAAKDNLLMQFQADILGIKVIRPKVMETTSMGVAMLAGLGVGLWNSLEELRNIWKVDKEFIPSMSEEKRRALYSGWKEAVKRAMGWAKVVGGQV</sequence>
<accession>C3MUZ1</accession>
<protein>
    <recommendedName>
        <fullName evidence="1">Glycerol kinase</fullName>
        <ecNumber evidence="1">2.7.1.30</ecNumber>
    </recommendedName>
    <alternativeName>
        <fullName evidence="1">ATP:glycerol 3-phosphotransferase</fullName>
    </alternativeName>
    <alternativeName>
        <fullName evidence="1">Glycerokinase</fullName>
        <shortName evidence="1">GK</shortName>
    </alternativeName>
</protein>
<evidence type="ECO:0000255" key="1">
    <source>
        <dbReference type="HAMAP-Rule" id="MF_00186"/>
    </source>
</evidence>
<comment type="function">
    <text evidence="1">Key enzyme in the regulation of glycerol uptake and metabolism. Catalyzes the phosphorylation of glycerol to yield sn-glycerol 3-phosphate.</text>
</comment>
<comment type="catalytic activity">
    <reaction evidence="1">
        <text>glycerol + ATP = sn-glycerol 3-phosphate + ADP + H(+)</text>
        <dbReference type="Rhea" id="RHEA:21644"/>
        <dbReference type="ChEBI" id="CHEBI:15378"/>
        <dbReference type="ChEBI" id="CHEBI:17754"/>
        <dbReference type="ChEBI" id="CHEBI:30616"/>
        <dbReference type="ChEBI" id="CHEBI:57597"/>
        <dbReference type="ChEBI" id="CHEBI:456216"/>
        <dbReference type="EC" id="2.7.1.30"/>
    </reaction>
</comment>
<comment type="pathway">
    <text evidence="1">Polyol metabolism; glycerol degradation via glycerol kinase pathway; sn-glycerol 3-phosphate from glycerol: step 1/1.</text>
</comment>
<comment type="similarity">
    <text evidence="1">Belongs to the FGGY kinase family.</text>
</comment>
<reference key="1">
    <citation type="journal article" date="2009" name="Proc. Natl. Acad. Sci. U.S.A.">
        <title>Biogeography of the Sulfolobus islandicus pan-genome.</title>
        <authorList>
            <person name="Reno M.L."/>
            <person name="Held N.L."/>
            <person name="Fields C.J."/>
            <person name="Burke P.V."/>
            <person name="Whitaker R.J."/>
        </authorList>
    </citation>
    <scope>NUCLEOTIDE SEQUENCE [LARGE SCALE GENOMIC DNA]</scope>
    <source>
        <strain>M.14.25 / Kamchatka #1</strain>
    </source>
</reference>
<organism>
    <name type="scientific">Saccharolobus islandicus (strain M.14.25 / Kamchatka #1)</name>
    <name type="common">Sulfolobus islandicus</name>
    <dbReference type="NCBI Taxonomy" id="427317"/>
    <lineage>
        <taxon>Archaea</taxon>
        <taxon>Thermoproteota</taxon>
        <taxon>Thermoprotei</taxon>
        <taxon>Sulfolobales</taxon>
        <taxon>Sulfolobaceae</taxon>
        <taxon>Saccharolobus</taxon>
    </lineage>
</organism>
<feature type="chain" id="PRO_1000203963" description="Glycerol kinase">
    <location>
        <begin position="1"/>
        <end position="501"/>
    </location>
</feature>
<feature type="binding site" evidence="1">
    <location>
        <position position="16"/>
    </location>
    <ligand>
        <name>ADP</name>
        <dbReference type="ChEBI" id="CHEBI:456216"/>
    </ligand>
</feature>
<feature type="binding site" evidence="1">
    <location>
        <position position="16"/>
    </location>
    <ligand>
        <name>ATP</name>
        <dbReference type="ChEBI" id="CHEBI:30616"/>
    </ligand>
</feature>
<feature type="binding site" evidence="1">
    <location>
        <position position="16"/>
    </location>
    <ligand>
        <name>sn-glycerol 3-phosphate</name>
        <dbReference type="ChEBI" id="CHEBI:57597"/>
    </ligand>
</feature>
<feature type="binding site" evidence="1">
    <location>
        <position position="17"/>
    </location>
    <ligand>
        <name>ATP</name>
        <dbReference type="ChEBI" id="CHEBI:30616"/>
    </ligand>
</feature>
<feature type="binding site" evidence="1">
    <location>
        <position position="18"/>
    </location>
    <ligand>
        <name>ATP</name>
        <dbReference type="ChEBI" id="CHEBI:30616"/>
    </ligand>
</feature>
<feature type="binding site" evidence="1">
    <location>
        <position position="20"/>
    </location>
    <ligand>
        <name>ADP</name>
        <dbReference type="ChEBI" id="CHEBI:456216"/>
    </ligand>
</feature>
<feature type="binding site" evidence="1">
    <location>
        <position position="84"/>
    </location>
    <ligand>
        <name>glycerol</name>
        <dbReference type="ChEBI" id="CHEBI:17754"/>
    </ligand>
</feature>
<feature type="binding site" evidence="1">
    <location>
        <position position="84"/>
    </location>
    <ligand>
        <name>sn-glycerol 3-phosphate</name>
        <dbReference type="ChEBI" id="CHEBI:57597"/>
    </ligand>
</feature>
<feature type="binding site" evidence="1">
    <location>
        <position position="85"/>
    </location>
    <ligand>
        <name>glycerol</name>
        <dbReference type="ChEBI" id="CHEBI:17754"/>
    </ligand>
</feature>
<feature type="binding site" evidence="1">
    <location>
        <position position="85"/>
    </location>
    <ligand>
        <name>sn-glycerol 3-phosphate</name>
        <dbReference type="ChEBI" id="CHEBI:57597"/>
    </ligand>
</feature>
<feature type="binding site" evidence="1">
    <location>
        <position position="135"/>
    </location>
    <ligand>
        <name>glycerol</name>
        <dbReference type="ChEBI" id="CHEBI:17754"/>
    </ligand>
</feature>
<feature type="binding site" evidence="1">
    <location>
        <position position="135"/>
    </location>
    <ligand>
        <name>sn-glycerol 3-phosphate</name>
        <dbReference type="ChEBI" id="CHEBI:57597"/>
    </ligand>
</feature>
<feature type="binding site" evidence="1">
    <location>
        <position position="242"/>
    </location>
    <ligand>
        <name>glycerol</name>
        <dbReference type="ChEBI" id="CHEBI:17754"/>
    </ligand>
</feature>
<feature type="binding site" evidence="1">
    <location>
        <position position="242"/>
    </location>
    <ligand>
        <name>sn-glycerol 3-phosphate</name>
        <dbReference type="ChEBI" id="CHEBI:57597"/>
    </ligand>
</feature>
<feature type="binding site" evidence="1">
    <location>
        <position position="243"/>
    </location>
    <ligand>
        <name>glycerol</name>
        <dbReference type="ChEBI" id="CHEBI:17754"/>
    </ligand>
</feature>
<feature type="binding site" evidence="1">
    <location>
        <position position="264"/>
    </location>
    <ligand>
        <name>ADP</name>
        <dbReference type="ChEBI" id="CHEBI:456216"/>
    </ligand>
</feature>
<feature type="binding site" evidence="1">
    <location>
        <position position="264"/>
    </location>
    <ligand>
        <name>ATP</name>
        <dbReference type="ChEBI" id="CHEBI:30616"/>
    </ligand>
</feature>
<feature type="binding site" evidence="1">
    <location>
        <position position="307"/>
    </location>
    <ligand>
        <name>ADP</name>
        <dbReference type="ChEBI" id="CHEBI:456216"/>
    </ligand>
</feature>
<feature type="binding site" evidence="1">
    <location>
        <position position="307"/>
    </location>
    <ligand>
        <name>ATP</name>
        <dbReference type="ChEBI" id="CHEBI:30616"/>
    </ligand>
</feature>
<feature type="binding site" evidence="1">
    <location>
        <position position="311"/>
    </location>
    <ligand>
        <name>ATP</name>
        <dbReference type="ChEBI" id="CHEBI:30616"/>
    </ligand>
</feature>
<feature type="binding site" evidence="1">
    <location>
        <position position="408"/>
    </location>
    <ligand>
        <name>ADP</name>
        <dbReference type="ChEBI" id="CHEBI:456216"/>
    </ligand>
</feature>
<feature type="binding site" evidence="1">
    <location>
        <position position="408"/>
    </location>
    <ligand>
        <name>ATP</name>
        <dbReference type="ChEBI" id="CHEBI:30616"/>
    </ligand>
</feature>